<evidence type="ECO:0000255" key="1">
    <source>
        <dbReference type="HAMAP-Rule" id="MF_01382"/>
    </source>
</evidence>
<comment type="function">
    <text evidence="1">Part of the Sec protein translocase complex. Interacts with the SecYEG preprotein conducting channel. Has a central role in coupling the hydrolysis of ATP to the transfer of proteins into and across the cell membrane, serving both as a receptor for the preprotein-SecB complex and as an ATP-driven molecular motor driving the stepwise translocation of polypeptide chains across the membrane.</text>
</comment>
<comment type="catalytic activity">
    <reaction evidence="1">
        <text>ATP + H2O + cellular proteinSide 1 = ADP + phosphate + cellular proteinSide 2.</text>
        <dbReference type="EC" id="7.4.2.8"/>
    </reaction>
</comment>
<comment type="cofactor">
    <cofactor evidence="1">
        <name>Zn(2+)</name>
        <dbReference type="ChEBI" id="CHEBI:29105"/>
    </cofactor>
    <text evidence="1">May bind 1 zinc ion per subunit.</text>
</comment>
<comment type="subunit">
    <text evidence="1">Monomer and homodimer. Part of the essential Sec protein translocation apparatus which comprises SecA, SecYEG and auxiliary proteins SecDF-YajC and YidC.</text>
</comment>
<comment type="subcellular location">
    <subcellularLocation>
        <location evidence="1">Cell inner membrane</location>
        <topology evidence="1">Peripheral membrane protein</topology>
        <orientation evidence="1">Cytoplasmic side</orientation>
    </subcellularLocation>
    <subcellularLocation>
        <location evidence="1">Cytoplasm</location>
    </subcellularLocation>
    <text evidence="1">Distribution is 50-50.</text>
</comment>
<comment type="similarity">
    <text evidence="1">Belongs to the SecA family.</text>
</comment>
<accession>Q9PF72</accession>
<dbReference type="EC" id="7.4.2.8" evidence="1"/>
<dbReference type="EMBL" id="AE003849">
    <property type="protein sequence ID" value="AAF83616.1"/>
    <property type="molecule type" value="Genomic_DNA"/>
</dbReference>
<dbReference type="PIR" id="F82760">
    <property type="entry name" value="F82760"/>
</dbReference>
<dbReference type="RefSeq" id="WP_010893327.1">
    <property type="nucleotide sequence ID" value="NC_002488.3"/>
</dbReference>
<dbReference type="SMR" id="Q9PF72"/>
<dbReference type="STRING" id="160492.XF_0806"/>
<dbReference type="KEGG" id="xfa:XF_0806"/>
<dbReference type="eggNOG" id="COG0653">
    <property type="taxonomic scope" value="Bacteria"/>
</dbReference>
<dbReference type="HOGENOM" id="CLU_005314_3_0_6"/>
<dbReference type="Proteomes" id="UP000000812">
    <property type="component" value="Chromosome"/>
</dbReference>
<dbReference type="GO" id="GO:0031522">
    <property type="term" value="C:cell envelope Sec protein transport complex"/>
    <property type="evidence" value="ECO:0007669"/>
    <property type="project" value="TreeGrafter"/>
</dbReference>
<dbReference type="GO" id="GO:0005829">
    <property type="term" value="C:cytosol"/>
    <property type="evidence" value="ECO:0007669"/>
    <property type="project" value="TreeGrafter"/>
</dbReference>
<dbReference type="GO" id="GO:0005886">
    <property type="term" value="C:plasma membrane"/>
    <property type="evidence" value="ECO:0007669"/>
    <property type="project" value="UniProtKB-SubCell"/>
</dbReference>
<dbReference type="GO" id="GO:0005524">
    <property type="term" value="F:ATP binding"/>
    <property type="evidence" value="ECO:0007669"/>
    <property type="project" value="UniProtKB-UniRule"/>
</dbReference>
<dbReference type="GO" id="GO:0046872">
    <property type="term" value="F:metal ion binding"/>
    <property type="evidence" value="ECO:0007669"/>
    <property type="project" value="UniProtKB-KW"/>
</dbReference>
<dbReference type="GO" id="GO:0008564">
    <property type="term" value="F:protein-exporting ATPase activity"/>
    <property type="evidence" value="ECO:0007669"/>
    <property type="project" value="UniProtKB-EC"/>
</dbReference>
<dbReference type="GO" id="GO:0065002">
    <property type="term" value="P:intracellular protein transmembrane transport"/>
    <property type="evidence" value="ECO:0007669"/>
    <property type="project" value="UniProtKB-UniRule"/>
</dbReference>
<dbReference type="GO" id="GO:0017038">
    <property type="term" value="P:protein import"/>
    <property type="evidence" value="ECO:0007669"/>
    <property type="project" value="InterPro"/>
</dbReference>
<dbReference type="GO" id="GO:0006605">
    <property type="term" value="P:protein targeting"/>
    <property type="evidence" value="ECO:0007669"/>
    <property type="project" value="UniProtKB-UniRule"/>
</dbReference>
<dbReference type="GO" id="GO:0043952">
    <property type="term" value="P:protein transport by the Sec complex"/>
    <property type="evidence" value="ECO:0007669"/>
    <property type="project" value="TreeGrafter"/>
</dbReference>
<dbReference type="CDD" id="cd17928">
    <property type="entry name" value="DEXDc_SecA"/>
    <property type="match status" value="1"/>
</dbReference>
<dbReference type="CDD" id="cd18803">
    <property type="entry name" value="SF2_C_secA"/>
    <property type="match status" value="1"/>
</dbReference>
<dbReference type="FunFam" id="3.40.50.300:FF:000113">
    <property type="entry name" value="Preprotein translocase subunit SecA"/>
    <property type="match status" value="1"/>
</dbReference>
<dbReference type="FunFam" id="3.90.1440.10:FF:000001">
    <property type="entry name" value="Preprotein translocase subunit SecA"/>
    <property type="match status" value="1"/>
</dbReference>
<dbReference type="FunFam" id="1.10.3060.10:FF:000003">
    <property type="entry name" value="Protein translocase subunit SecA"/>
    <property type="match status" value="1"/>
</dbReference>
<dbReference type="FunFam" id="3.40.50.300:FF:000334">
    <property type="entry name" value="Protein translocase subunit SecA"/>
    <property type="match status" value="1"/>
</dbReference>
<dbReference type="Gene3D" id="1.10.3060.10">
    <property type="entry name" value="Helical scaffold and wing domains of SecA"/>
    <property type="match status" value="1"/>
</dbReference>
<dbReference type="Gene3D" id="3.40.50.300">
    <property type="entry name" value="P-loop containing nucleotide triphosphate hydrolases"/>
    <property type="match status" value="2"/>
</dbReference>
<dbReference type="Gene3D" id="3.90.1440.10">
    <property type="entry name" value="SecA, preprotein cross-linking domain"/>
    <property type="match status" value="1"/>
</dbReference>
<dbReference type="HAMAP" id="MF_01382">
    <property type="entry name" value="SecA"/>
    <property type="match status" value="1"/>
</dbReference>
<dbReference type="InterPro" id="IPR014001">
    <property type="entry name" value="Helicase_ATP-bd"/>
</dbReference>
<dbReference type="InterPro" id="IPR001650">
    <property type="entry name" value="Helicase_C-like"/>
</dbReference>
<dbReference type="InterPro" id="IPR027417">
    <property type="entry name" value="P-loop_NTPase"/>
</dbReference>
<dbReference type="InterPro" id="IPR004027">
    <property type="entry name" value="SEC_C_motif"/>
</dbReference>
<dbReference type="InterPro" id="IPR000185">
    <property type="entry name" value="SecA"/>
</dbReference>
<dbReference type="InterPro" id="IPR020937">
    <property type="entry name" value="SecA_CS"/>
</dbReference>
<dbReference type="InterPro" id="IPR011115">
    <property type="entry name" value="SecA_DEAD"/>
</dbReference>
<dbReference type="InterPro" id="IPR014018">
    <property type="entry name" value="SecA_motor_DEAD"/>
</dbReference>
<dbReference type="InterPro" id="IPR011130">
    <property type="entry name" value="SecA_preprotein_X-link_dom"/>
</dbReference>
<dbReference type="InterPro" id="IPR044722">
    <property type="entry name" value="SecA_SF2_C"/>
</dbReference>
<dbReference type="InterPro" id="IPR011116">
    <property type="entry name" value="SecA_Wing/Scaffold"/>
</dbReference>
<dbReference type="InterPro" id="IPR036266">
    <property type="entry name" value="SecA_Wing/Scaffold_sf"/>
</dbReference>
<dbReference type="InterPro" id="IPR036670">
    <property type="entry name" value="SecA_X-link_sf"/>
</dbReference>
<dbReference type="NCBIfam" id="NF009538">
    <property type="entry name" value="PRK12904.1"/>
    <property type="match status" value="1"/>
</dbReference>
<dbReference type="NCBIfam" id="TIGR00963">
    <property type="entry name" value="secA"/>
    <property type="match status" value="1"/>
</dbReference>
<dbReference type="PANTHER" id="PTHR30612:SF0">
    <property type="entry name" value="CHLOROPLAST PROTEIN-TRANSPORTING ATPASE"/>
    <property type="match status" value="1"/>
</dbReference>
<dbReference type="PANTHER" id="PTHR30612">
    <property type="entry name" value="SECA INNER MEMBRANE COMPONENT OF SEC PROTEIN SECRETION SYSTEM"/>
    <property type="match status" value="1"/>
</dbReference>
<dbReference type="Pfam" id="PF21090">
    <property type="entry name" value="P-loop_SecA"/>
    <property type="match status" value="1"/>
</dbReference>
<dbReference type="Pfam" id="PF02810">
    <property type="entry name" value="SEC-C"/>
    <property type="match status" value="1"/>
</dbReference>
<dbReference type="Pfam" id="PF07517">
    <property type="entry name" value="SecA_DEAD"/>
    <property type="match status" value="1"/>
</dbReference>
<dbReference type="Pfam" id="PF01043">
    <property type="entry name" value="SecA_PP_bind"/>
    <property type="match status" value="1"/>
</dbReference>
<dbReference type="Pfam" id="PF07516">
    <property type="entry name" value="SecA_SW"/>
    <property type="match status" value="1"/>
</dbReference>
<dbReference type="PRINTS" id="PR00906">
    <property type="entry name" value="SECA"/>
</dbReference>
<dbReference type="SMART" id="SM00957">
    <property type="entry name" value="SecA_DEAD"/>
    <property type="match status" value="1"/>
</dbReference>
<dbReference type="SMART" id="SM00958">
    <property type="entry name" value="SecA_PP_bind"/>
    <property type="match status" value="1"/>
</dbReference>
<dbReference type="SUPFAM" id="SSF81886">
    <property type="entry name" value="Helical scaffold and wing domains of SecA"/>
    <property type="match status" value="1"/>
</dbReference>
<dbReference type="SUPFAM" id="SSF52540">
    <property type="entry name" value="P-loop containing nucleoside triphosphate hydrolases"/>
    <property type="match status" value="2"/>
</dbReference>
<dbReference type="SUPFAM" id="SSF81767">
    <property type="entry name" value="Pre-protein crosslinking domain of SecA"/>
    <property type="match status" value="1"/>
</dbReference>
<dbReference type="PROSITE" id="PS01312">
    <property type="entry name" value="SECA"/>
    <property type="match status" value="1"/>
</dbReference>
<dbReference type="PROSITE" id="PS51196">
    <property type="entry name" value="SECA_MOTOR_DEAD"/>
    <property type="match status" value="1"/>
</dbReference>
<organism>
    <name type="scientific">Xylella fastidiosa (strain 9a5c)</name>
    <dbReference type="NCBI Taxonomy" id="160492"/>
    <lineage>
        <taxon>Bacteria</taxon>
        <taxon>Pseudomonadati</taxon>
        <taxon>Pseudomonadota</taxon>
        <taxon>Gammaproteobacteria</taxon>
        <taxon>Lysobacterales</taxon>
        <taxon>Lysobacteraceae</taxon>
        <taxon>Xylella</taxon>
    </lineage>
</organism>
<gene>
    <name evidence="1" type="primary">secA</name>
    <name type="ordered locus">XF_0806</name>
</gene>
<name>SECA_XYLFA</name>
<sequence length="914" mass="103115">MINSLLTRLFGSRNERQLRQLNSIVAKINALETELQKLSDTALQAKTTEFKQSIQDGKSLDKLLPEAFAVCREASRRVLGMRHYDVQLIGGMVLHLGKIAEMRTGEGKTLVATLPVYLNALAGNGVHVVTVNDYLARRDAAHMGRLYNWLGLSVGVVYPGMPHSDKHAAYGADITYGTNNEFGFDYLRDNMALSKADRYQRGLHYAIVDEVDSILIDEARTPLIISGPADESPDLYIRVNRIIPHLTRQENEEAEGDYWVDEKGKQVHLSEVGMERAEELLHQAGILGEEDDSLYAAQNLSVVHHLNAALRAHALYQRDVDYIVRDGEVVIVDEFTGRTLAGRRWSDGLHQAIEAKEGVPVQRENQTLASITFQNLFRIYKKLSGMTGTADTEAYEFQSIYGLEVMVIPTNRPTVRKDYPDQVFLNRSSKFNAVLEDIKDCAQRGQPVLVGTTSIEISEMLSEHLRKAKVKHEVLNAKQHEREATIVANAGLPGAVTIATNMAGRGTDIVLGGSLDTVLAELDPDATEEDRFRVKTAWNRRHEAVKAAGGLHIIGTERHESRRIDNQLRGRAGRQGDPGSSRFYLSLEDSLMRIFASEWVQKVMRLMGMKEGDVIEDRRVTRQIERAQRKVEAHNFDIRKNLLDYDDVNNEQRKVVYAQRDELLDAESIKENIDSIRHEVIDALVTRFVPEHSIDEQWDLPGLQATLQSEWGLHLPLIEMLKGREEVDAERIAFLVQDAVDKHCAEREASIGAETMRALEKHVMLTVLDQGWKEHLATMDYLRQGIHLRGYAQKQPKQEYKREAFELFSEMLEHVKREVIASLARVRIRSEEEMAALEEQERRQVDTLLRQSQFQHQEAGGYGTGDEAVSLQRQLAGQGAAIAQVIRDTPKVGRNDPCPCGSGKKYKHCHGLVT</sequence>
<feature type="chain" id="PRO_0000321048" description="Protein translocase subunit SecA">
    <location>
        <begin position="1"/>
        <end position="914"/>
    </location>
</feature>
<feature type="binding site" evidence="1">
    <location>
        <position position="87"/>
    </location>
    <ligand>
        <name>ATP</name>
        <dbReference type="ChEBI" id="CHEBI:30616"/>
    </ligand>
</feature>
<feature type="binding site" evidence="1">
    <location>
        <begin position="105"/>
        <end position="109"/>
    </location>
    <ligand>
        <name>ATP</name>
        <dbReference type="ChEBI" id="CHEBI:30616"/>
    </ligand>
</feature>
<feature type="binding site" evidence="1">
    <location>
        <position position="508"/>
    </location>
    <ligand>
        <name>ATP</name>
        <dbReference type="ChEBI" id="CHEBI:30616"/>
    </ligand>
</feature>
<feature type="binding site" evidence="1">
    <location>
        <position position="898"/>
    </location>
    <ligand>
        <name>Zn(2+)</name>
        <dbReference type="ChEBI" id="CHEBI:29105"/>
    </ligand>
</feature>
<feature type="binding site" evidence="1">
    <location>
        <position position="900"/>
    </location>
    <ligand>
        <name>Zn(2+)</name>
        <dbReference type="ChEBI" id="CHEBI:29105"/>
    </ligand>
</feature>
<feature type="binding site" evidence="1">
    <location>
        <position position="909"/>
    </location>
    <ligand>
        <name>Zn(2+)</name>
        <dbReference type="ChEBI" id="CHEBI:29105"/>
    </ligand>
</feature>
<feature type="binding site" evidence="1">
    <location>
        <position position="910"/>
    </location>
    <ligand>
        <name>Zn(2+)</name>
        <dbReference type="ChEBI" id="CHEBI:29105"/>
    </ligand>
</feature>
<reference key="1">
    <citation type="journal article" date="2000" name="Nature">
        <title>The genome sequence of the plant pathogen Xylella fastidiosa.</title>
        <authorList>
            <person name="Simpson A.J.G."/>
            <person name="Reinach F.C."/>
            <person name="Arruda P."/>
            <person name="Abreu F.A."/>
            <person name="Acencio M."/>
            <person name="Alvarenga R."/>
            <person name="Alves L.M.C."/>
            <person name="Araya J.E."/>
            <person name="Baia G.S."/>
            <person name="Baptista C.S."/>
            <person name="Barros M.H."/>
            <person name="Bonaccorsi E.D."/>
            <person name="Bordin S."/>
            <person name="Bove J.M."/>
            <person name="Briones M.R.S."/>
            <person name="Bueno M.R.P."/>
            <person name="Camargo A.A."/>
            <person name="Camargo L.E.A."/>
            <person name="Carraro D.M."/>
            <person name="Carrer H."/>
            <person name="Colauto N.B."/>
            <person name="Colombo C."/>
            <person name="Costa F.F."/>
            <person name="Costa M.C.R."/>
            <person name="Costa-Neto C.M."/>
            <person name="Coutinho L.L."/>
            <person name="Cristofani M."/>
            <person name="Dias-Neto E."/>
            <person name="Docena C."/>
            <person name="El-Dorry H."/>
            <person name="Facincani A.P."/>
            <person name="Ferreira A.J.S."/>
            <person name="Ferreira V.C.A."/>
            <person name="Ferro J.A."/>
            <person name="Fraga J.S."/>
            <person name="Franca S.C."/>
            <person name="Franco M.C."/>
            <person name="Frohme M."/>
            <person name="Furlan L.R."/>
            <person name="Garnier M."/>
            <person name="Goldman G.H."/>
            <person name="Goldman M.H.S."/>
            <person name="Gomes S.L."/>
            <person name="Gruber A."/>
            <person name="Ho P.L."/>
            <person name="Hoheisel J.D."/>
            <person name="Junqueira M.L."/>
            <person name="Kemper E.L."/>
            <person name="Kitajima J.P."/>
            <person name="Krieger J.E."/>
            <person name="Kuramae E.E."/>
            <person name="Laigret F."/>
            <person name="Lambais M.R."/>
            <person name="Leite L.C.C."/>
            <person name="Lemos E.G.M."/>
            <person name="Lemos M.V.F."/>
            <person name="Lopes S.A."/>
            <person name="Lopes C.R."/>
            <person name="Machado J.A."/>
            <person name="Machado M.A."/>
            <person name="Madeira A.M.B.N."/>
            <person name="Madeira H.M.F."/>
            <person name="Marino C.L."/>
            <person name="Marques M.V."/>
            <person name="Martins E.A.L."/>
            <person name="Martins E.M.F."/>
            <person name="Matsukuma A.Y."/>
            <person name="Menck C.F.M."/>
            <person name="Miracca E.C."/>
            <person name="Miyaki C.Y."/>
            <person name="Monteiro-Vitorello C.B."/>
            <person name="Moon D.H."/>
            <person name="Nagai M.A."/>
            <person name="Nascimento A.L.T.O."/>
            <person name="Netto L.E.S."/>
            <person name="Nhani A. Jr."/>
            <person name="Nobrega F.G."/>
            <person name="Nunes L.R."/>
            <person name="Oliveira M.A."/>
            <person name="de Oliveira M.C."/>
            <person name="de Oliveira R.C."/>
            <person name="Palmieri D.A."/>
            <person name="Paris A."/>
            <person name="Peixoto B.R."/>
            <person name="Pereira G.A.G."/>
            <person name="Pereira H.A. Jr."/>
            <person name="Pesquero J.B."/>
            <person name="Quaggio R.B."/>
            <person name="Roberto P.G."/>
            <person name="Rodrigues V."/>
            <person name="de Rosa A.J.M."/>
            <person name="de Rosa V.E. Jr."/>
            <person name="de Sa R.G."/>
            <person name="Santelli R.V."/>
            <person name="Sawasaki H.E."/>
            <person name="da Silva A.C.R."/>
            <person name="da Silva A.M."/>
            <person name="da Silva F.R."/>
            <person name="Silva W.A. Jr."/>
            <person name="da Silveira J.F."/>
            <person name="Silvestri M.L.Z."/>
            <person name="Siqueira W.J."/>
            <person name="de Souza A.A."/>
            <person name="de Souza A.P."/>
            <person name="Terenzi M.F."/>
            <person name="Truffi D."/>
            <person name="Tsai S.M."/>
            <person name="Tsuhako M.H."/>
            <person name="Vallada H."/>
            <person name="Van Sluys M.A."/>
            <person name="Verjovski-Almeida S."/>
            <person name="Vettore A.L."/>
            <person name="Zago M.A."/>
            <person name="Zatz M."/>
            <person name="Meidanis J."/>
            <person name="Setubal J.C."/>
        </authorList>
    </citation>
    <scope>NUCLEOTIDE SEQUENCE [LARGE SCALE GENOMIC DNA]</scope>
    <source>
        <strain>9a5c</strain>
    </source>
</reference>
<proteinExistence type="inferred from homology"/>
<keyword id="KW-0067">ATP-binding</keyword>
<keyword id="KW-0997">Cell inner membrane</keyword>
<keyword id="KW-1003">Cell membrane</keyword>
<keyword id="KW-0963">Cytoplasm</keyword>
<keyword id="KW-0472">Membrane</keyword>
<keyword id="KW-0479">Metal-binding</keyword>
<keyword id="KW-0547">Nucleotide-binding</keyword>
<keyword id="KW-0653">Protein transport</keyword>
<keyword id="KW-1278">Translocase</keyword>
<keyword id="KW-0811">Translocation</keyword>
<keyword id="KW-0813">Transport</keyword>
<keyword id="KW-0862">Zinc</keyword>
<protein>
    <recommendedName>
        <fullName evidence="1">Protein translocase subunit SecA</fullName>
        <ecNumber evidence="1">7.4.2.8</ecNumber>
    </recommendedName>
</protein>